<feature type="chain" id="PRO_0000278455" description="Homeobox protein HMX1">
    <location>
        <begin position="1"/>
        <end position="333"/>
    </location>
</feature>
<feature type="DNA-binding region" description="Homeobox" evidence="1">
    <location>
        <begin position="201"/>
        <end position="260"/>
    </location>
</feature>
<feature type="region of interest" description="Disordered" evidence="2">
    <location>
        <begin position="1"/>
        <end position="74"/>
    </location>
</feature>
<feature type="region of interest" description="Disordered" evidence="2">
    <location>
        <begin position="86"/>
        <end position="109"/>
    </location>
</feature>
<feature type="region of interest" description="Disordered" evidence="2">
    <location>
        <begin position="139"/>
        <end position="204"/>
    </location>
</feature>
<feature type="short sequence motif" description="HMX family specific domain 1">
    <location>
        <begin position="261"/>
        <end position="271"/>
    </location>
</feature>
<feature type="compositionally biased region" description="Polar residues" evidence="2">
    <location>
        <begin position="17"/>
        <end position="30"/>
    </location>
</feature>
<feature type="compositionally biased region" description="Gly residues" evidence="2">
    <location>
        <begin position="87"/>
        <end position="105"/>
    </location>
</feature>
<feature type="compositionally biased region" description="Basic and acidic residues" evidence="2">
    <location>
        <begin position="144"/>
        <end position="158"/>
    </location>
</feature>
<feature type="compositionally biased region" description="Gly residues" evidence="2">
    <location>
        <begin position="159"/>
        <end position="176"/>
    </location>
</feature>
<feature type="compositionally biased region" description="Acidic residues" evidence="2">
    <location>
        <begin position="181"/>
        <end position="192"/>
    </location>
</feature>
<comment type="function">
    <text evidence="3">DNA-binding protein that binds to the 5'-CAAG-3' core sequence. May function as a transcriptional repressor. Seems to act as a transcriptional antagonist of NKX2-5. May play an important role in the development of craniofacial structures such as the eye and ear.</text>
</comment>
<comment type="subcellular location">
    <subcellularLocation>
        <location evidence="4">Nucleus</location>
    </subcellularLocation>
</comment>
<comment type="developmental stage">
    <text evidence="3">At stage 11, expressed in the surface ectoderm surrounding the optic vesicle. At stage 15, expressed in anterior/nasal side of the early retina. At stage 26, during the peak period of ganglion cell genesis, highly expressed in the nasal retina and the lens ectoderm.</text>
</comment>
<comment type="similarity">
    <text evidence="4">Belongs to the HMX homeobox family.</text>
</comment>
<organism>
    <name type="scientific">Gallus gallus</name>
    <name type="common">Chicken</name>
    <dbReference type="NCBI Taxonomy" id="9031"/>
    <lineage>
        <taxon>Eukaryota</taxon>
        <taxon>Metazoa</taxon>
        <taxon>Chordata</taxon>
        <taxon>Craniata</taxon>
        <taxon>Vertebrata</taxon>
        <taxon>Euteleostomi</taxon>
        <taxon>Archelosauria</taxon>
        <taxon>Archosauria</taxon>
        <taxon>Dinosauria</taxon>
        <taxon>Saurischia</taxon>
        <taxon>Theropoda</taxon>
        <taxon>Coelurosauria</taxon>
        <taxon>Aves</taxon>
        <taxon>Neognathae</taxon>
        <taxon>Galloanserae</taxon>
        <taxon>Galliformes</taxon>
        <taxon>Phasianidae</taxon>
        <taxon>Phasianinae</taxon>
        <taxon>Gallus</taxon>
    </lineage>
</organism>
<dbReference type="EMBL" id="AF227921">
    <property type="protein sequence ID" value="AAG48561.1"/>
    <property type="molecule type" value="mRNA"/>
</dbReference>
<dbReference type="RefSeq" id="NP_990864.1">
    <property type="nucleotide sequence ID" value="NM_205533.1"/>
</dbReference>
<dbReference type="SMR" id="Q9DE09"/>
<dbReference type="FunCoup" id="Q9DE09">
    <property type="interactions" value="94"/>
</dbReference>
<dbReference type="GlyGen" id="Q9DE09">
    <property type="glycosylation" value="2 sites"/>
</dbReference>
<dbReference type="PaxDb" id="9031-ENSGALP00000025107"/>
<dbReference type="GeneID" id="396546"/>
<dbReference type="KEGG" id="gga:396546"/>
<dbReference type="CTD" id="3166"/>
<dbReference type="VEuPathDB" id="HostDB:geneid_396546"/>
<dbReference type="eggNOG" id="KOG0485">
    <property type="taxonomic scope" value="Eukaryota"/>
</dbReference>
<dbReference type="HOGENOM" id="CLU_064096_2_0_1"/>
<dbReference type="InParanoid" id="Q9DE09"/>
<dbReference type="OrthoDB" id="6159439at2759"/>
<dbReference type="PRO" id="PR:Q9DE09"/>
<dbReference type="Proteomes" id="UP000000539">
    <property type="component" value="Unassembled WGS sequence"/>
</dbReference>
<dbReference type="GO" id="GO:0005634">
    <property type="term" value="C:nucleus"/>
    <property type="evidence" value="ECO:0000318"/>
    <property type="project" value="GO_Central"/>
</dbReference>
<dbReference type="GO" id="GO:0003677">
    <property type="term" value="F:DNA binding"/>
    <property type="evidence" value="ECO:0000315"/>
    <property type="project" value="UniProtKB"/>
</dbReference>
<dbReference type="GO" id="GO:0000981">
    <property type="term" value="F:DNA-binding transcription factor activity, RNA polymerase II-specific"/>
    <property type="evidence" value="ECO:0000318"/>
    <property type="project" value="GO_Central"/>
</dbReference>
<dbReference type="GO" id="GO:0000977">
    <property type="term" value="F:RNA polymerase II transcription regulatory region sequence-specific DNA binding"/>
    <property type="evidence" value="ECO:0000318"/>
    <property type="project" value="GO_Central"/>
</dbReference>
<dbReference type="GO" id="GO:0045892">
    <property type="term" value="P:negative regulation of DNA-templated transcription"/>
    <property type="evidence" value="ECO:0000315"/>
    <property type="project" value="UniProtKB"/>
</dbReference>
<dbReference type="GO" id="GO:0006357">
    <property type="term" value="P:regulation of transcription by RNA polymerase II"/>
    <property type="evidence" value="ECO:0000318"/>
    <property type="project" value="GO_Central"/>
</dbReference>
<dbReference type="CDD" id="cd00086">
    <property type="entry name" value="homeodomain"/>
    <property type="match status" value="1"/>
</dbReference>
<dbReference type="FunFam" id="1.10.10.60:FF:000053">
    <property type="entry name" value="H6 family homeobox 2"/>
    <property type="match status" value="1"/>
</dbReference>
<dbReference type="Gene3D" id="1.10.10.60">
    <property type="entry name" value="Homeodomain-like"/>
    <property type="match status" value="1"/>
</dbReference>
<dbReference type="InterPro" id="IPR001356">
    <property type="entry name" value="HD"/>
</dbReference>
<dbReference type="InterPro" id="IPR020479">
    <property type="entry name" value="HD_metazoa"/>
</dbReference>
<dbReference type="InterPro" id="IPR051300">
    <property type="entry name" value="HMX_Homeobox_TF"/>
</dbReference>
<dbReference type="InterPro" id="IPR017970">
    <property type="entry name" value="Homeobox_CS"/>
</dbReference>
<dbReference type="InterPro" id="IPR009057">
    <property type="entry name" value="Homeodomain-like_sf"/>
</dbReference>
<dbReference type="PANTHER" id="PTHR46110">
    <property type="entry name" value="HOMEOBOX PROTEIN HMX"/>
    <property type="match status" value="1"/>
</dbReference>
<dbReference type="PANTHER" id="PTHR46110:SF1">
    <property type="entry name" value="HOMEOBOX PROTEIN HMX1"/>
    <property type="match status" value="1"/>
</dbReference>
<dbReference type="Pfam" id="PF00046">
    <property type="entry name" value="Homeodomain"/>
    <property type="match status" value="1"/>
</dbReference>
<dbReference type="PRINTS" id="PR00024">
    <property type="entry name" value="HOMEOBOX"/>
</dbReference>
<dbReference type="SMART" id="SM00389">
    <property type="entry name" value="HOX"/>
    <property type="match status" value="1"/>
</dbReference>
<dbReference type="SUPFAM" id="SSF46689">
    <property type="entry name" value="Homeodomain-like"/>
    <property type="match status" value="1"/>
</dbReference>
<dbReference type="PROSITE" id="PS00027">
    <property type="entry name" value="HOMEOBOX_1"/>
    <property type="match status" value="1"/>
</dbReference>
<dbReference type="PROSITE" id="PS50071">
    <property type="entry name" value="HOMEOBOX_2"/>
    <property type="match status" value="1"/>
</dbReference>
<accession>Q9DE09</accession>
<name>HMX1_CHICK</name>
<proteinExistence type="evidence at transcript level"/>
<gene>
    <name type="primary">HMX1</name>
    <name type="synonym">H6</name>
</gene>
<keyword id="KW-0217">Developmental protein</keyword>
<keyword id="KW-0238">DNA-binding</keyword>
<keyword id="KW-0371">Homeobox</keyword>
<keyword id="KW-0539">Nucleus</keyword>
<keyword id="KW-1185">Reference proteome</keyword>
<keyword id="KW-0678">Repressor</keyword>
<keyword id="KW-0804">Transcription</keyword>
<keyword id="KW-0805">Transcription regulation</keyword>
<reference key="1">
    <citation type="journal article" date="2000" name="Development">
        <title>Two homeobox genes define the domain of EphA3 expression in the developing chick retina.</title>
        <authorList>
            <person name="Schulte D."/>
            <person name="Cepko C.L."/>
        </authorList>
    </citation>
    <scope>NUCLEOTIDE SEQUENCE [MRNA]</scope>
    <scope>FUNCTION</scope>
    <scope>DEVELOPMENTAL STAGE</scope>
</reference>
<protein>
    <recommendedName>
        <fullName>Homeobox protein HMX1</fullName>
    </recommendedName>
    <alternativeName>
        <fullName>GH6</fullName>
    </alternativeName>
    <alternativeName>
        <fullName>Homeobox protein H6</fullName>
    </alternativeName>
</protein>
<evidence type="ECO:0000255" key="1">
    <source>
        <dbReference type="PROSITE-ProRule" id="PRU00108"/>
    </source>
</evidence>
<evidence type="ECO:0000256" key="2">
    <source>
        <dbReference type="SAM" id="MobiDB-lite"/>
    </source>
</evidence>
<evidence type="ECO:0000269" key="3">
    <source>
    </source>
</evidence>
<evidence type="ECO:0000305" key="4"/>
<sequence>MAQDRECLCSAGFQRGDYTQGNTDRSTAAANSRPPAGQRGAEEPSSGGAGTPPPAAVLPTMPDEATENAGSTSARVSSFFIEDLLGTEGGGGTRRAAAGGGGGRGAPRCGPHSPLRLGASGCPLRDAAVGWYRRAFLGCASPDTSDRDSPELPEDTERAGGGGRAAARGPAGGRQSSGGREEEEERGEEAGEAEQRAAGRKKKTRTVFSRSQVFQLESTFDVKRYLSSSERAGLAASLHLTETQVKIWFQNRRNKWKRQLAADLEAANLSHAAQRIVRVPILYHENSPASALGFGLPHMSPPLVGFSGGVSYPLGTFPAASLPFLRSQMTGLV</sequence>